<reference key="1">
    <citation type="journal article" date="2007" name="J. Bacteriol.">
        <title>Whole-genome analysis of the methyl tert-butyl ether-degrading beta-proteobacterium Methylibium petroleiphilum PM1.</title>
        <authorList>
            <person name="Kane S.R."/>
            <person name="Chakicherla A.Y."/>
            <person name="Chain P.S.G."/>
            <person name="Schmidt R."/>
            <person name="Shin M.W."/>
            <person name="Legler T.C."/>
            <person name="Scow K.M."/>
            <person name="Larimer F.W."/>
            <person name="Lucas S.M."/>
            <person name="Richardson P.M."/>
            <person name="Hristova K.R."/>
        </authorList>
    </citation>
    <scope>NUCLEOTIDE SEQUENCE [LARGE SCALE GENOMIC DNA]</scope>
    <source>
        <strain>ATCC BAA-1232 / LMG 22953 / PM1</strain>
    </source>
</reference>
<proteinExistence type="inferred from homology"/>
<comment type="function">
    <text evidence="1">Required for maturation of 30S ribosomal subunits.</text>
</comment>
<comment type="subcellular location">
    <subcellularLocation>
        <location evidence="1">Cytoplasm</location>
    </subcellularLocation>
</comment>
<comment type="similarity">
    <text evidence="1">Belongs to the RimP family.</text>
</comment>
<accession>A2SH42</accession>
<sequence>MSWQAAVEKTVTGFGYELVECERGSQGLLRVFIDRVPGQVYDGGPGEFVTVEDCEKVTRQLQYVLEVENCDYSRLEVSSPGLDRPLKKSADYARFAGERIDITLKLPFQGRKKYQGVLAASGEAWELHFNDGKQDQVLGFTLEEVRDARLVPVVDFKGRKGKEPAEPAAQVPGGYEQ</sequence>
<organism>
    <name type="scientific">Methylibium petroleiphilum (strain ATCC BAA-1232 / LMG 22953 / PM1)</name>
    <dbReference type="NCBI Taxonomy" id="420662"/>
    <lineage>
        <taxon>Bacteria</taxon>
        <taxon>Pseudomonadati</taxon>
        <taxon>Pseudomonadota</taxon>
        <taxon>Betaproteobacteria</taxon>
        <taxon>Burkholderiales</taxon>
        <taxon>Sphaerotilaceae</taxon>
        <taxon>Methylibium</taxon>
    </lineage>
</organism>
<feature type="chain" id="PRO_1000136778" description="Ribosome maturation factor RimP">
    <location>
        <begin position="1"/>
        <end position="177"/>
    </location>
</feature>
<evidence type="ECO:0000255" key="1">
    <source>
        <dbReference type="HAMAP-Rule" id="MF_01077"/>
    </source>
</evidence>
<protein>
    <recommendedName>
        <fullName evidence="1">Ribosome maturation factor RimP</fullName>
    </recommendedName>
</protein>
<gene>
    <name evidence="1" type="primary">rimP</name>
    <name type="ordered locus">Mpe_A1923</name>
</gene>
<name>RIMP_METPP</name>
<keyword id="KW-0963">Cytoplasm</keyword>
<keyword id="KW-1185">Reference proteome</keyword>
<keyword id="KW-0690">Ribosome biogenesis</keyword>
<dbReference type="EMBL" id="CP000555">
    <property type="protein sequence ID" value="ABM94881.1"/>
    <property type="molecule type" value="Genomic_DNA"/>
</dbReference>
<dbReference type="RefSeq" id="WP_011829518.1">
    <property type="nucleotide sequence ID" value="NC_008825.1"/>
</dbReference>
<dbReference type="SMR" id="A2SH42"/>
<dbReference type="STRING" id="420662.Mpe_A1923"/>
<dbReference type="KEGG" id="mpt:Mpe_A1923"/>
<dbReference type="eggNOG" id="COG0779">
    <property type="taxonomic scope" value="Bacteria"/>
</dbReference>
<dbReference type="HOGENOM" id="CLU_070525_1_0_4"/>
<dbReference type="Proteomes" id="UP000000366">
    <property type="component" value="Chromosome"/>
</dbReference>
<dbReference type="GO" id="GO:0005829">
    <property type="term" value="C:cytosol"/>
    <property type="evidence" value="ECO:0007669"/>
    <property type="project" value="TreeGrafter"/>
</dbReference>
<dbReference type="GO" id="GO:0000028">
    <property type="term" value="P:ribosomal small subunit assembly"/>
    <property type="evidence" value="ECO:0007669"/>
    <property type="project" value="TreeGrafter"/>
</dbReference>
<dbReference type="GO" id="GO:0006412">
    <property type="term" value="P:translation"/>
    <property type="evidence" value="ECO:0007669"/>
    <property type="project" value="TreeGrafter"/>
</dbReference>
<dbReference type="CDD" id="cd01734">
    <property type="entry name" value="YlxS_C"/>
    <property type="match status" value="1"/>
</dbReference>
<dbReference type="Gene3D" id="2.30.30.180">
    <property type="entry name" value="Ribosome maturation factor RimP, C-terminal domain"/>
    <property type="match status" value="1"/>
</dbReference>
<dbReference type="Gene3D" id="3.30.300.70">
    <property type="entry name" value="RimP-like superfamily, N-terminal"/>
    <property type="match status" value="1"/>
</dbReference>
<dbReference type="HAMAP" id="MF_01077">
    <property type="entry name" value="RimP"/>
    <property type="match status" value="1"/>
</dbReference>
<dbReference type="InterPro" id="IPR003728">
    <property type="entry name" value="Ribosome_maturation_RimP"/>
</dbReference>
<dbReference type="InterPro" id="IPR028998">
    <property type="entry name" value="RimP_C"/>
</dbReference>
<dbReference type="InterPro" id="IPR036847">
    <property type="entry name" value="RimP_C_sf"/>
</dbReference>
<dbReference type="InterPro" id="IPR028989">
    <property type="entry name" value="RimP_N"/>
</dbReference>
<dbReference type="InterPro" id="IPR035956">
    <property type="entry name" value="RimP_N_sf"/>
</dbReference>
<dbReference type="NCBIfam" id="NF000929">
    <property type="entry name" value="PRK00092.2-1"/>
    <property type="match status" value="1"/>
</dbReference>
<dbReference type="PANTHER" id="PTHR33867">
    <property type="entry name" value="RIBOSOME MATURATION FACTOR RIMP"/>
    <property type="match status" value="1"/>
</dbReference>
<dbReference type="PANTHER" id="PTHR33867:SF1">
    <property type="entry name" value="RIBOSOME MATURATION FACTOR RIMP"/>
    <property type="match status" value="1"/>
</dbReference>
<dbReference type="Pfam" id="PF17384">
    <property type="entry name" value="DUF150_C"/>
    <property type="match status" value="1"/>
</dbReference>
<dbReference type="Pfam" id="PF02576">
    <property type="entry name" value="RimP_N"/>
    <property type="match status" value="1"/>
</dbReference>
<dbReference type="SUPFAM" id="SSF74942">
    <property type="entry name" value="YhbC-like, C-terminal domain"/>
    <property type="match status" value="1"/>
</dbReference>
<dbReference type="SUPFAM" id="SSF75420">
    <property type="entry name" value="YhbC-like, N-terminal domain"/>
    <property type="match status" value="1"/>
</dbReference>